<organism>
    <name type="scientific">Escherichia coli O1:K1 / APEC</name>
    <dbReference type="NCBI Taxonomy" id="405955"/>
    <lineage>
        <taxon>Bacteria</taxon>
        <taxon>Pseudomonadati</taxon>
        <taxon>Pseudomonadota</taxon>
        <taxon>Gammaproteobacteria</taxon>
        <taxon>Enterobacterales</taxon>
        <taxon>Enterobacteriaceae</taxon>
        <taxon>Escherichia</taxon>
    </lineage>
</organism>
<proteinExistence type="inferred from homology"/>
<evidence type="ECO:0000255" key="1">
    <source>
        <dbReference type="HAMAP-Rule" id="MF_01563"/>
    </source>
</evidence>
<protein>
    <recommendedName>
        <fullName evidence="1">HTH-type transcriptional regulator UlaR</fullName>
    </recommendedName>
</protein>
<name>ULAR_ECOK1</name>
<feature type="chain" id="PRO_1000069048" description="HTH-type transcriptional regulator UlaR">
    <location>
        <begin position="1"/>
        <end position="251"/>
    </location>
</feature>
<feature type="domain" description="HTH deoR-type" evidence="1">
    <location>
        <begin position="3"/>
        <end position="58"/>
    </location>
</feature>
<feature type="DNA-binding region" description="H-T-H motif" evidence="1">
    <location>
        <begin position="20"/>
        <end position="39"/>
    </location>
</feature>
<sequence length="251" mass="27602">MTEAQRHQILLEMLAQLGFVTVEKVVERLGISPATARRDINKLDESGKLKKVRNGAEAITQQRPRWTPMNLHQAQNHDEKVRIAKAASQLVNPGESVVINCGSTAFLLGREMCGKPVQIITNYLPLANYLIDQEHDSVIIMGGQYNKSQSITLSPQGSENSLYAGHWMFTSGKGLTAEGLYKTDMLTAMAEQKMLSVVGKLVVLVDSSKIGERAGMLFSRADQIDMLITGKNANPEILQQLEAQGVSILRV</sequence>
<comment type="function">
    <text evidence="1">Represses ulaG and the ulaABCDEF operon.</text>
</comment>
<comment type="subcellular location">
    <subcellularLocation>
        <location evidence="1">Cytoplasm</location>
    </subcellularLocation>
</comment>
<gene>
    <name evidence="1" type="primary">ulaR</name>
    <name type="ordered locus">Ecok1_42420</name>
    <name type="ORF">APECO1_2201</name>
</gene>
<accession>A1AJ96</accession>
<dbReference type="EMBL" id="CP000468">
    <property type="protein sequence ID" value="ABJ03736.1"/>
    <property type="molecule type" value="Genomic_DNA"/>
</dbReference>
<dbReference type="RefSeq" id="WP_000133631.1">
    <property type="nucleotide sequence ID" value="NZ_CADILS010000035.1"/>
</dbReference>
<dbReference type="SMR" id="A1AJ96"/>
<dbReference type="GeneID" id="75202425"/>
<dbReference type="KEGG" id="ecv:APECO1_2201"/>
<dbReference type="HOGENOM" id="CLU_060699_3_2_6"/>
<dbReference type="Proteomes" id="UP000008216">
    <property type="component" value="Chromosome"/>
</dbReference>
<dbReference type="GO" id="GO:0005737">
    <property type="term" value="C:cytoplasm"/>
    <property type="evidence" value="ECO:0007669"/>
    <property type="project" value="UniProtKB-SubCell"/>
</dbReference>
<dbReference type="GO" id="GO:0003677">
    <property type="term" value="F:DNA binding"/>
    <property type="evidence" value="ECO:0007669"/>
    <property type="project" value="UniProtKB-KW"/>
</dbReference>
<dbReference type="GO" id="GO:0003700">
    <property type="term" value="F:DNA-binding transcription factor activity"/>
    <property type="evidence" value="ECO:0007669"/>
    <property type="project" value="InterPro"/>
</dbReference>
<dbReference type="GO" id="GO:0045892">
    <property type="term" value="P:negative regulation of DNA-templated transcription"/>
    <property type="evidence" value="ECO:0007669"/>
    <property type="project" value="UniProtKB-UniRule"/>
</dbReference>
<dbReference type="FunFam" id="1.10.10.10:FF:000160">
    <property type="entry name" value="HTH-type transcriptional regulator UlaR"/>
    <property type="match status" value="1"/>
</dbReference>
<dbReference type="Gene3D" id="1.10.10.10">
    <property type="entry name" value="Winged helix-like DNA-binding domain superfamily/Winged helix DNA-binding domain"/>
    <property type="match status" value="1"/>
</dbReference>
<dbReference type="HAMAP" id="MF_01563">
    <property type="entry name" value="HTH_type_UlaR"/>
    <property type="match status" value="1"/>
</dbReference>
<dbReference type="InterPro" id="IPR050313">
    <property type="entry name" value="Carb_Metab_HTH_regulators"/>
</dbReference>
<dbReference type="InterPro" id="IPR014036">
    <property type="entry name" value="DeoR-like_C"/>
</dbReference>
<dbReference type="InterPro" id="IPR001034">
    <property type="entry name" value="DeoR_HTH"/>
</dbReference>
<dbReference type="InterPro" id="IPR037171">
    <property type="entry name" value="NagB/RpiA_transferase-like"/>
</dbReference>
<dbReference type="InterPro" id="IPR018356">
    <property type="entry name" value="Tscrpt_reg_HTH_DeoR_CS"/>
</dbReference>
<dbReference type="InterPro" id="IPR023711">
    <property type="entry name" value="Tscrpt_reg_HTH_UlaR"/>
</dbReference>
<dbReference type="InterPro" id="IPR036388">
    <property type="entry name" value="WH-like_DNA-bd_sf"/>
</dbReference>
<dbReference type="InterPro" id="IPR036390">
    <property type="entry name" value="WH_DNA-bd_sf"/>
</dbReference>
<dbReference type="NCBIfam" id="NF010034">
    <property type="entry name" value="PRK13509.1"/>
    <property type="match status" value="1"/>
</dbReference>
<dbReference type="PANTHER" id="PTHR30363">
    <property type="entry name" value="HTH-TYPE TRANSCRIPTIONAL REGULATOR SRLR-RELATED"/>
    <property type="match status" value="1"/>
</dbReference>
<dbReference type="PANTHER" id="PTHR30363:SF55">
    <property type="entry name" value="HTH-TYPE TRANSCRIPTIONAL REGULATOR ULAR"/>
    <property type="match status" value="1"/>
</dbReference>
<dbReference type="Pfam" id="PF00455">
    <property type="entry name" value="DeoRC"/>
    <property type="match status" value="1"/>
</dbReference>
<dbReference type="Pfam" id="PF08220">
    <property type="entry name" value="HTH_DeoR"/>
    <property type="match status" value="1"/>
</dbReference>
<dbReference type="PRINTS" id="PR00037">
    <property type="entry name" value="HTHLACR"/>
</dbReference>
<dbReference type="SMART" id="SM01134">
    <property type="entry name" value="DeoRC"/>
    <property type="match status" value="1"/>
</dbReference>
<dbReference type="SMART" id="SM00420">
    <property type="entry name" value="HTH_DEOR"/>
    <property type="match status" value="1"/>
</dbReference>
<dbReference type="SUPFAM" id="SSF100950">
    <property type="entry name" value="NagB/RpiA/CoA transferase-like"/>
    <property type="match status" value="1"/>
</dbReference>
<dbReference type="SUPFAM" id="SSF46785">
    <property type="entry name" value="Winged helix' DNA-binding domain"/>
    <property type="match status" value="1"/>
</dbReference>
<dbReference type="PROSITE" id="PS00894">
    <property type="entry name" value="HTH_DEOR_1"/>
    <property type="match status" value="1"/>
</dbReference>
<dbReference type="PROSITE" id="PS51000">
    <property type="entry name" value="HTH_DEOR_2"/>
    <property type="match status" value="1"/>
</dbReference>
<keyword id="KW-0963">Cytoplasm</keyword>
<keyword id="KW-0238">DNA-binding</keyword>
<keyword id="KW-1185">Reference proteome</keyword>
<keyword id="KW-0678">Repressor</keyword>
<keyword id="KW-0804">Transcription</keyword>
<keyword id="KW-0805">Transcription regulation</keyword>
<reference key="1">
    <citation type="journal article" date="2007" name="J. Bacteriol.">
        <title>The genome sequence of avian pathogenic Escherichia coli strain O1:K1:H7 shares strong similarities with human extraintestinal pathogenic E. coli genomes.</title>
        <authorList>
            <person name="Johnson T.J."/>
            <person name="Kariyawasam S."/>
            <person name="Wannemuehler Y."/>
            <person name="Mangiamele P."/>
            <person name="Johnson S.J."/>
            <person name="Doetkott C."/>
            <person name="Skyberg J.A."/>
            <person name="Lynne A.M."/>
            <person name="Johnson J.R."/>
            <person name="Nolan L.K."/>
        </authorList>
    </citation>
    <scope>NUCLEOTIDE SEQUENCE [LARGE SCALE GENOMIC DNA]</scope>
</reference>